<keyword id="KW-0028">Amino-acid biosynthesis</keyword>
<keyword id="KW-0057">Aromatic amino acid biosynthesis</keyword>
<keyword id="KW-0210">Decarboxylase</keyword>
<keyword id="KW-0456">Lyase</keyword>
<keyword id="KW-1185">Reference proteome</keyword>
<keyword id="KW-0822">Tryptophan biosynthesis</keyword>
<reference key="1">
    <citation type="journal article" date="2006" name="Nat. Biotechnol.">
        <title>Genome sequence of the bioplastic-producing 'Knallgas' bacterium Ralstonia eutropha H16.</title>
        <authorList>
            <person name="Pohlmann A."/>
            <person name="Fricke W.F."/>
            <person name="Reinecke F."/>
            <person name="Kusian B."/>
            <person name="Liesegang H."/>
            <person name="Cramm R."/>
            <person name="Eitinger T."/>
            <person name="Ewering C."/>
            <person name="Poetter M."/>
            <person name="Schwartz E."/>
            <person name="Strittmatter A."/>
            <person name="Voss I."/>
            <person name="Gottschalk G."/>
            <person name="Steinbuechel A."/>
            <person name="Friedrich B."/>
            <person name="Bowien B."/>
        </authorList>
    </citation>
    <scope>NUCLEOTIDE SEQUENCE [LARGE SCALE GENOMIC DNA]</scope>
    <source>
        <strain>ATCC 17699 / DSM 428 / KCTC 22496 / NCIMB 10442 / H16 / Stanier 337</strain>
    </source>
</reference>
<comment type="catalytic activity">
    <reaction evidence="1">
        <text>1-(2-carboxyphenylamino)-1-deoxy-D-ribulose 5-phosphate + H(+) = (1S,2R)-1-C-(indol-3-yl)glycerol 3-phosphate + CO2 + H2O</text>
        <dbReference type="Rhea" id="RHEA:23476"/>
        <dbReference type="ChEBI" id="CHEBI:15377"/>
        <dbReference type="ChEBI" id="CHEBI:15378"/>
        <dbReference type="ChEBI" id="CHEBI:16526"/>
        <dbReference type="ChEBI" id="CHEBI:58613"/>
        <dbReference type="ChEBI" id="CHEBI:58866"/>
        <dbReference type="EC" id="4.1.1.48"/>
    </reaction>
</comment>
<comment type="pathway">
    <text evidence="1">Amino-acid biosynthesis; L-tryptophan biosynthesis; L-tryptophan from chorismate: step 4/5.</text>
</comment>
<comment type="similarity">
    <text evidence="1">Belongs to the TrpC family.</text>
</comment>
<organism>
    <name type="scientific">Cupriavidus necator (strain ATCC 17699 / DSM 428 / KCTC 22496 / NCIMB 10442 / H16 / Stanier 337)</name>
    <name type="common">Ralstonia eutropha</name>
    <dbReference type="NCBI Taxonomy" id="381666"/>
    <lineage>
        <taxon>Bacteria</taxon>
        <taxon>Pseudomonadati</taxon>
        <taxon>Pseudomonadota</taxon>
        <taxon>Betaproteobacteria</taxon>
        <taxon>Burkholderiales</taxon>
        <taxon>Burkholderiaceae</taxon>
        <taxon>Cupriavidus</taxon>
    </lineage>
</organism>
<evidence type="ECO:0000255" key="1">
    <source>
        <dbReference type="HAMAP-Rule" id="MF_00134"/>
    </source>
</evidence>
<dbReference type="EC" id="4.1.1.48" evidence="1"/>
<dbReference type="EMBL" id="AM260479">
    <property type="protein sequence ID" value="CAJ94391.1"/>
    <property type="molecule type" value="Genomic_DNA"/>
</dbReference>
<dbReference type="RefSeq" id="WP_010809899.1">
    <property type="nucleotide sequence ID" value="NZ_CP039287.1"/>
</dbReference>
<dbReference type="SMR" id="Q0K6I0"/>
<dbReference type="STRING" id="381666.H16_A3322"/>
<dbReference type="KEGG" id="reh:H16_A3322"/>
<dbReference type="eggNOG" id="COG0134">
    <property type="taxonomic scope" value="Bacteria"/>
</dbReference>
<dbReference type="HOGENOM" id="CLU_034247_2_0_4"/>
<dbReference type="OrthoDB" id="9804217at2"/>
<dbReference type="UniPathway" id="UPA00035">
    <property type="reaction ID" value="UER00043"/>
</dbReference>
<dbReference type="Proteomes" id="UP000008210">
    <property type="component" value="Chromosome 1"/>
</dbReference>
<dbReference type="GO" id="GO:0004425">
    <property type="term" value="F:indole-3-glycerol-phosphate synthase activity"/>
    <property type="evidence" value="ECO:0007669"/>
    <property type="project" value="UniProtKB-UniRule"/>
</dbReference>
<dbReference type="GO" id="GO:0004640">
    <property type="term" value="F:phosphoribosylanthranilate isomerase activity"/>
    <property type="evidence" value="ECO:0007669"/>
    <property type="project" value="TreeGrafter"/>
</dbReference>
<dbReference type="GO" id="GO:0000162">
    <property type="term" value="P:L-tryptophan biosynthetic process"/>
    <property type="evidence" value="ECO:0007669"/>
    <property type="project" value="UniProtKB-UniRule"/>
</dbReference>
<dbReference type="CDD" id="cd00331">
    <property type="entry name" value="IGPS"/>
    <property type="match status" value="1"/>
</dbReference>
<dbReference type="FunFam" id="3.20.20.70:FF:000024">
    <property type="entry name" value="Indole-3-glycerol phosphate synthase"/>
    <property type="match status" value="1"/>
</dbReference>
<dbReference type="Gene3D" id="3.20.20.70">
    <property type="entry name" value="Aldolase class I"/>
    <property type="match status" value="1"/>
</dbReference>
<dbReference type="HAMAP" id="MF_00134_B">
    <property type="entry name" value="IGPS_B"/>
    <property type="match status" value="1"/>
</dbReference>
<dbReference type="InterPro" id="IPR013785">
    <property type="entry name" value="Aldolase_TIM"/>
</dbReference>
<dbReference type="InterPro" id="IPR045186">
    <property type="entry name" value="Indole-3-glycerol_P_synth"/>
</dbReference>
<dbReference type="InterPro" id="IPR013798">
    <property type="entry name" value="Indole-3-glycerol_P_synth_dom"/>
</dbReference>
<dbReference type="InterPro" id="IPR001468">
    <property type="entry name" value="Indole-3-GlycerolPSynthase_CS"/>
</dbReference>
<dbReference type="InterPro" id="IPR011060">
    <property type="entry name" value="RibuloseP-bd_barrel"/>
</dbReference>
<dbReference type="NCBIfam" id="NF001373">
    <property type="entry name" value="PRK00278.1-6"/>
    <property type="match status" value="1"/>
</dbReference>
<dbReference type="NCBIfam" id="NF001377">
    <property type="entry name" value="PRK00278.2-4"/>
    <property type="match status" value="1"/>
</dbReference>
<dbReference type="PANTHER" id="PTHR22854:SF2">
    <property type="entry name" value="INDOLE-3-GLYCEROL-PHOSPHATE SYNTHASE"/>
    <property type="match status" value="1"/>
</dbReference>
<dbReference type="PANTHER" id="PTHR22854">
    <property type="entry name" value="TRYPTOPHAN BIOSYNTHESIS PROTEIN"/>
    <property type="match status" value="1"/>
</dbReference>
<dbReference type="Pfam" id="PF00218">
    <property type="entry name" value="IGPS"/>
    <property type="match status" value="1"/>
</dbReference>
<dbReference type="SUPFAM" id="SSF51366">
    <property type="entry name" value="Ribulose-phoshate binding barrel"/>
    <property type="match status" value="1"/>
</dbReference>
<dbReference type="PROSITE" id="PS00614">
    <property type="entry name" value="IGPS"/>
    <property type="match status" value="1"/>
</dbReference>
<name>TRPC_CUPNH</name>
<proteinExistence type="inferred from homology"/>
<gene>
    <name evidence="1" type="primary">trpC</name>
    <name type="ordered locus">H16_A3322</name>
</gene>
<protein>
    <recommendedName>
        <fullName evidence="1">Indole-3-glycerol phosphate synthase</fullName>
        <shortName evidence="1">IGPS</shortName>
        <ecNumber evidence="1">4.1.1.48</ecNumber>
    </recommendedName>
</protein>
<feature type="chain" id="PRO_1000018538" description="Indole-3-glycerol phosphate synthase">
    <location>
        <begin position="1"/>
        <end position="267"/>
    </location>
</feature>
<sequence>MSDILQKILAVKADEVAAARKKRDLPSLRAEAESLRTEPGLAPRGFERALREKIAAGQAGVIAEVKKASPSKGVLREHFVPEAIAESYASHGAACLSVLTDVNFFQGHADYLKRARGACPLPALRKDFMVDLYQVYEARTWGADCILLIVAALDPGLMAELEACALELGMDVLVEVHGDDELDAALRLKTPLLGVNNRNLRTFEVSLDNTLDLLPHMPADKLVVTESGILGQADVKRMRDANVHAFLVGEAFMRAPDPGVELARLFA</sequence>
<accession>Q0K6I0</accession>